<sequence>MLSMFMYNNIIDYVHVHDIEDEASDNDDRDYVYPLPENMVYRFDKSTNILDYLSTERDHVMMAVQYYMSKQRLDDLYRQLPTKTRSYVDIINTYCDKVNNDYNSDMNIMCDMASTESFTVYDINNEVNTILMNNKGLGVRLATISFITELGRRCMNPVETIKMFTLLSHTICDDYFVDYITYISAPRDNAIHSTREYLKIMGIAVIMFATYKTLKYMIG</sequence>
<dbReference type="EMBL" id="MT903340">
    <property type="protein sequence ID" value="QNP12901.1"/>
    <property type="molecule type" value="Genomic_DNA"/>
</dbReference>
<dbReference type="RefSeq" id="YP_010377028.1">
    <property type="nucleotide sequence ID" value="NC_063383.1"/>
</dbReference>
<dbReference type="SMR" id="A0A7H0DN18"/>
<dbReference type="GeneID" id="72551441"/>
<dbReference type="Proteomes" id="UP000516359">
    <property type="component" value="Genome"/>
</dbReference>
<dbReference type="GO" id="GO:0044193">
    <property type="term" value="C:host cell mitochondrial outer membrane"/>
    <property type="evidence" value="ECO:0007669"/>
    <property type="project" value="UniProtKB-SubCell"/>
</dbReference>
<dbReference type="GO" id="GO:0016020">
    <property type="term" value="C:membrane"/>
    <property type="evidence" value="ECO:0007669"/>
    <property type="project" value="UniProtKB-KW"/>
</dbReference>
<dbReference type="GO" id="GO:0042981">
    <property type="term" value="P:regulation of apoptotic process"/>
    <property type="evidence" value="ECO:0007669"/>
    <property type="project" value="InterPro"/>
</dbReference>
<dbReference type="GO" id="GO:0033668">
    <property type="term" value="P:symbiont-mediated suppression of host apoptosis"/>
    <property type="evidence" value="ECO:0007669"/>
    <property type="project" value="InterPro"/>
</dbReference>
<dbReference type="FunFam" id="1.10.437.10:FF:000013">
    <property type="entry name" value="Protein F1"/>
    <property type="match status" value="1"/>
</dbReference>
<dbReference type="Gene3D" id="1.10.437.10">
    <property type="entry name" value="Blc2-like"/>
    <property type="match status" value="1"/>
</dbReference>
<dbReference type="InterPro" id="IPR036834">
    <property type="entry name" value="Bcl-2-like_sf"/>
</dbReference>
<dbReference type="InterPro" id="IPR011207">
    <property type="entry name" value="Orthopox_F1"/>
</dbReference>
<dbReference type="InterPro" id="IPR021119">
    <property type="entry name" value="Poxvirus_F1/C10"/>
</dbReference>
<dbReference type="Pfam" id="PF11099">
    <property type="entry name" value="M11L"/>
    <property type="match status" value="1"/>
</dbReference>
<dbReference type="PIRSF" id="PIRSF015971">
    <property type="entry name" value="VAC_F1L"/>
    <property type="match status" value="1"/>
</dbReference>
<comment type="function">
    <text evidence="2">Plays a role in evading host innate immune response by inhibiting host inflammasome activation. Interacts with and inhibits NLR-mediated interleukin-1 beta/IL1B production in infected cells. At the host mitochondria outer membrane, interacts with the BH3 domain of host BAK and prevents BAK from binding active BAX. In turn, host apoptosis is inhibited.</text>
</comment>
<comment type="subunit">
    <text evidence="1 2">Homodimer. Interacts with host pro-apoptotic protein BCL2L11 (via BH3 domain). Interacts with host NLRP1. Interacts with host BAK.</text>
</comment>
<comment type="subcellular location">
    <subcellularLocation>
        <location evidence="2">Host mitochondrion outer membrane</location>
    </subcellularLocation>
    <subcellularLocation>
        <location evidence="2">Host cytoplasm</location>
    </subcellularLocation>
</comment>
<comment type="induction">
    <text evidence="2">Expressed in the early phase of the viral replicative cycle.</text>
</comment>
<comment type="similarity">
    <text evidence="3">Belongs to the orthopoxvirus OPG045 family.</text>
</comment>
<keyword id="KW-0244">Early protein</keyword>
<keyword id="KW-1035">Host cytoplasm</keyword>
<keyword id="KW-1043">Host membrane</keyword>
<keyword id="KW-1045">Host mitochondrion</keyword>
<keyword id="KW-1047">Host mitochondrion outer membrane</keyword>
<keyword id="KW-0472">Membrane</keyword>
<keyword id="KW-1185">Reference proteome</keyword>
<gene>
    <name type="primary">OPG045</name>
    <name type="ORF">MPXVgp033</name>
</gene>
<protein>
    <recommendedName>
        <fullName>Apoptosis regulator OPG045</fullName>
    </recommendedName>
    <alternativeName>
        <fullName>Protein F1</fullName>
    </alternativeName>
</protein>
<name>PG045_MONPV</name>
<organismHost>
    <name type="scientific">Cynomys gunnisoni</name>
    <name type="common">Gunnison's prairie dog</name>
    <name type="synonym">Spermophilus gunnisoni</name>
    <dbReference type="NCBI Taxonomy" id="45479"/>
</organismHost>
<organismHost>
    <name type="scientific">Cynomys leucurus</name>
    <name type="common">White-tailed prairie dog</name>
    <dbReference type="NCBI Taxonomy" id="99825"/>
</organismHost>
<organismHost>
    <name type="scientific">Cynomys ludovicianus</name>
    <name type="common">Black-tailed prairie dog</name>
    <dbReference type="NCBI Taxonomy" id="45480"/>
</organismHost>
<organismHost>
    <name type="scientific">Cynomys mexicanus</name>
    <name type="common">Mexican prairie dog</name>
    <dbReference type="NCBI Taxonomy" id="99826"/>
</organismHost>
<organismHost>
    <name type="scientific">Cynomys parvidens</name>
    <name type="common">Utah prairie dog</name>
    <dbReference type="NCBI Taxonomy" id="99827"/>
</organismHost>
<organismHost>
    <name type="scientific">Gliridae</name>
    <name type="common">dormice</name>
    <dbReference type="NCBI Taxonomy" id="30650"/>
</organismHost>
<organismHost>
    <name type="scientific">Heliosciurus ruwenzorii</name>
    <name type="common">Ruwenzori sun squirrel</name>
    <dbReference type="NCBI Taxonomy" id="226685"/>
</organismHost>
<organismHost>
    <name type="scientific">Homo sapiens</name>
    <name type="common">Human</name>
    <dbReference type="NCBI Taxonomy" id="9606"/>
</organismHost>
<organismHost>
    <name type="scientific">Mus musculus</name>
    <name type="common">Mouse</name>
    <dbReference type="NCBI Taxonomy" id="10090"/>
</organismHost>
<organism evidence="4 5">
    <name type="scientific">Monkeypox virus</name>
    <dbReference type="NCBI Taxonomy" id="10244"/>
    <lineage>
        <taxon>Viruses</taxon>
        <taxon>Varidnaviria</taxon>
        <taxon>Bamfordvirae</taxon>
        <taxon>Nucleocytoviricota</taxon>
        <taxon>Pokkesviricetes</taxon>
        <taxon>Chitovirales</taxon>
        <taxon>Poxviridae</taxon>
        <taxon>Chordopoxvirinae</taxon>
        <taxon>Orthopoxvirus</taxon>
    </lineage>
</organism>
<feature type="chain" id="PRO_0000457632" description="Apoptosis regulator OPG045">
    <location>
        <begin position="1"/>
        <end position="219"/>
    </location>
</feature>
<proteinExistence type="inferred from homology"/>
<evidence type="ECO:0000250" key="1">
    <source>
        <dbReference type="UniProtKB" id="O57173"/>
    </source>
</evidence>
<evidence type="ECO:0000250" key="2">
    <source>
        <dbReference type="UniProtKB" id="P24356"/>
    </source>
</evidence>
<evidence type="ECO:0000305" key="3"/>
<evidence type="ECO:0000312" key="4">
    <source>
        <dbReference type="EMBL" id="QNP12901.1"/>
    </source>
</evidence>
<evidence type="ECO:0000312" key="5">
    <source>
        <dbReference type="Proteomes" id="UP000516359"/>
    </source>
</evidence>
<reference key="1">
    <citation type="journal article" date="2022" name="J. Infect. Dis.">
        <title>Exportation of Monkeypox virus from the African continent.</title>
        <authorList>
            <person name="Mauldin M.R."/>
            <person name="McCollum A.M."/>
            <person name="Nakazawa Y.J."/>
            <person name="Mandra A."/>
            <person name="Whitehouse E.R."/>
            <person name="Davidson W."/>
            <person name="Zhao H."/>
            <person name="Gao J."/>
            <person name="Li Y."/>
            <person name="Doty J."/>
            <person name="Yinka-Ogunleye A."/>
            <person name="Akinpelu A."/>
            <person name="Aruna O."/>
            <person name="Naidoo D."/>
            <person name="Lewandowski K."/>
            <person name="Afrough B."/>
            <person name="Graham V."/>
            <person name="Aarons E."/>
            <person name="Hewson R."/>
            <person name="Vipond R."/>
            <person name="Dunning J."/>
            <person name="Chand M."/>
            <person name="Brown C."/>
            <person name="Cohen-Gihon I."/>
            <person name="Erez N."/>
            <person name="Shifman O."/>
            <person name="Israeli O."/>
            <person name="Sharon M."/>
            <person name="Schwartz E."/>
            <person name="Beth-Din A."/>
            <person name="Zvi A."/>
            <person name="Mak T.M."/>
            <person name="Ng Y.K."/>
            <person name="Cui L."/>
            <person name="Lin R.T.P."/>
            <person name="Olson V.A."/>
            <person name="Brooks T."/>
            <person name="Paran N."/>
            <person name="Ihekweazu C."/>
            <person name="Reynolds M.G."/>
        </authorList>
    </citation>
    <scope>NUCLEOTIDE SEQUENCE [LARGE SCALE GENOMIC DNA]</scope>
</reference>
<accession>A0A7H0DN18</accession>